<keyword id="KW-0002">3D-structure</keyword>
<keyword id="KW-0945">Host-virus interaction</keyword>
<keyword id="KW-0378">Hydrolase</keyword>
<keyword id="KW-1090">Inhibition of host innate immune response by virus</keyword>
<keyword id="KW-0479">Metal-binding</keyword>
<keyword id="KW-1185">Reference proteome</keyword>
<keyword id="KW-0899">Viral immunoevasion</keyword>
<keyword id="KW-0862">Zinc</keyword>
<gene>
    <name evidence="6" type="ORF">BSP38_126</name>
</gene>
<comment type="function">
    <text evidence="3">Counteracts the host Pycsar antiviral defense system. Phosphodiesterase that enables metal-dependent hydrolysis of host cyclic nucleotide Pycsar defense signals such as cCMP and cUMP.</text>
</comment>
<comment type="catalytic activity">
    <reaction evidence="3">
        <text>3',5'-cyclic CMP + H2O = CMP + H(+)</text>
        <dbReference type="Rhea" id="RHEA:72675"/>
        <dbReference type="ChEBI" id="CHEBI:15377"/>
        <dbReference type="ChEBI" id="CHEBI:15378"/>
        <dbReference type="ChEBI" id="CHEBI:58003"/>
        <dbReference type="ChEBI" id="CHEBI:60377"/>
    </reaction>
    <physiologicalReaction direction="left-to-right" evidence="3">
        <dbReference type="Rhea" id="RHEA:72676"/>
    </physiologicalReaction>
</comment>
<comment type="catalytic activity">
    <reaction evidence="3">
        <text>3',5'-cyclic UMP + H2O = UMP + H(+)</text>
        <dbReference type="Rhea" id="RHEA:70575"/>
        <dbReference type="ChEBI" id="CHEBI:15377"/>
        <dbReference type="ChEBI" id="CHEBI:15378"/>
        <dbReference type="ChEBI" id="CHEBI:57865"/>
        <dbReference type="ChEBI" id="CHEBI:184387"/>
    </reaction>
    <physiologicalReaction direction="left-to-right" evidence="3">
        <dbReference type="Rhea" id="RHEA:70576"/>
    </physiologicalReaction>
</comment>
<comment type="cofactor">
    <cofactor evidence="3">
        <name>Zn(2+)</name>
        <dbReference type="ChEBI" id="CHEBI:29105"/>
    </cofactor>
    <text evidence="3">Coordinates 2 Zn(2+) ions. One protomer coordinates the metal ions and the opposing protomer provides the catalytic residues required for cCMP hydrolysis.</text>
</comment>
<comment type="subunit">
    <text evidence="2">Homodimer.</text>
</comment>
<comment type="similarity">
    <text evidence="5">Belongs to the anti-Pycsar protein Apyc1 family.</text>
</comment>
<name>APYC1_BPBSP</name>
<organism>
    <name type="scientific">Bacillus phage BSP38</name>
    <dbReference type="NCBI Taxonomy" id="2283013"/>
    <lineage>
        <taxon>Viruses</taxon>
        <taxon>Duplodnaviria</taxon>
        <taxon>Heunggongvirae</taxon>
        <taxon>Uroviricota</taxon>
        <taxon>Caudoviricetes</taxon>
        <taxon>Herelleviridae</taxon>
        <taxon>Bastillevirinae</taxon>
        <taxon>Jeonjuvirus</taxon>
        <taxon>Jeonjuvirus BSP38</taxon>
    </lineage>
</organism>
<dbReference type="EMBL" id="MH606185">
    <property type="protein sequence ID" value="AXH71168.1"/>
    <property type="molecule type" value="Genomic_DNA"/>
</dbReference>
<dbReference type="PDB" id="7T28">
    <property type="method" value="X-ray"/>
    <property type="resolution" value="2.68 A"/>
    <property type="chains" value="A=1-256"/>
</dbReference>
<dbReference type="PDBsum" id="7T28"/>
<dbReference type="SMR" id="A0A345MJY6"/>
<dbReference type="Proteomes" id="UP000260425">
    <property type="component" value="Genome"/>
</dbReference>
<dbReference type="GO" id="GO:0042781">
    <property type="term" value="F:3'-tRNA processing endoribonuclease activity"/>
    <property type="evidence" value="ECO:0007669"/>
    <property type="project" value="TreeGrafter"/>
</dbReference>
<dbReference type="GO" id="GO:0046872">
    <property type="term" value="F:metal ion binding"/>
    <property type="evidence" value="ECO:0007669"/>
    <property type="project" value="UniProtKB-KW"/>
</dbReference>
<dbReference type="GO" id="GO:0052170">
    <property type="term" value="P:symbiont-mediated suppression of host innate immune response"/>
    <property type="evidence" value="ECO:0007669"/>
    <property type="project" value="UniProtKB-KW"/>
</dbReference>
<dbReference type="Gene3D" id="3.60.15.10">
    <property type="entry name" value="Ribonuclease Z/Hydroxyacylglutathione hydrolase-like"/>
    <property type="match status" value="1"/>
</dbReference>
<dbReference type="InterPro" id="IPR056308">
    <property type="entry name" value="Anti-Pycsar_Apyc1"/>
</dbReference>
<dbReference type="InterPro" id="IPR001279">
    <property type="entry name" value="Metallo-B-lactamas"/>
</dbReference>
<dbReference type="InterPro" id="IPR036866">
    <property type="entry name" value="RibonucZ/Hydroxyglut_hydro"/>
</dbReference>
<dbReference type="PANTHER" id="PTHR46018">
    <property type="entry name" value="ZINC PHOSPHODIESTERASE ELAC PROTEIN 1"/>
    <property type="match status" value="1"/>
</dbReference>
<dbReference type="PANTHER" id="PTHR46018:SF2">
    <property type="entry name" value="ZINC PHOSPHODIESTERASE ELAC PROTEIN 1"/>
    <property type="match status" value="1"/>
</dbReference>
<dbReference type="Pfam" id="PF23023">
    <property type="entry name" value="Anti-Pycsar_Apyc1"/>
    <property type="match status" value="1"/>
</dbReference>
<dbReference type="SMART" id="SM00849">
    <property type="entry name" value="Lactamase_B"/>
    <property type="match status" value="1"/>
</dbReference>
<dbReference type="SUPFAM" id="SSF56281">
    <property type="entry name" value="Metallo-hydrolase/oxidoreductase"/>
    <property type="match status" value="1"/>
</dbReference>
<reference key="1">
    <citation type="journal article" date="2019" name="Arch. Virol.">
        <title>Complete nucleotide sequence analysis of a novel Bacillus subtilis-infecting phage, BSP38, possibly belonging to a new genus in the subfamily Spounavirinae.</title>
        <authorList>
            <person name="Ghosh K."/>
            <person name="Kim K.P."/>
        </authorList>
    </citation>
    <scope>NUCLEOTIDE SEQUENCE [LARGE SCALE GENOMIC DNA]</scope>
</reference>
<reference key="2">
    <citation type="journal article" date="2022" name="Nature">
        <title>Phage anti-CBASS and anti-Pycsar nucleases subvert bacterial immunity.</title>
        <authorList>
            <person name="Hobbs S.J."/>
            <person name="Wein T."/>
            <person name="Lu A."/>
            <person name="Morehouse B.R."/>
            <person name="Schnabel J."/>
            <person name="Leavitt A."/>
            <person name="Yirmiya E."/>
            <person name="Sorek R."/>
            <person name="Kranzusch P.J."/>
        </authorList>
    </citation>
    <scope>X-RAY CRYSTALLOGRAPHY (2.68 ANGSTROMS) IN COMPLEX WITH ZINC</scope>
    <scope>FUNCTION</scope>
    <scope>COFACTOR</scope>
    <scope>MUTAGENESIS OF HIS-64; ASP-68; HIS-69; GLU-74 AND TYR-112</scope>
    <scope>ACTIVE SITE</scope>
    <scope>CATALYTIC ACTIVITY</scope>
</reference>
<feature type="chain" id="PRO_0000456667" description="Anti-Pycsar protein Apyc1">
    <location>
        <begin position="1"/>
        <end position="256"/>
    </location>
</feature>
<feature type="region of interest" description="Beta-lactamase-like" evidence="5">
    <location>
        <begin position="21"/>
        <end position="230"/>
    </location>
</feature>
<feature type="active site" evidence="3">
    <location>
        <position position="74"/>
    </location>
</feature>
<feature type="active site" evidence="3">
    <location>
        <position position="112"/>
    </location>
</feature>
<feature type="binding site" evidence="3">
    <location>
        <position position="64"/>
    </location>
    <ligand>
        <name>Zn(2+)</name>
        <dbReference type="ChEBI" id="CHEBI:29105"/>
        <label>2</label>
    </ligand>
</feature>
<feature type="binding site" evidence="1">
    <location>
        <position position="66"/>
    </location>
    <ligand>
        <name>Zn(2+)</name>
        <dbReference type="ChEBI" id="CHEBI:29105"/>
        <label>2</label>
    </ligand>
</feature>
<feature type="binding site" evidence="2">
    <location>
        <position position="68"/>
    </location>
    <ligand>
        <name>Zn(2+)</name>
        <dbReference type="ChEBI" id="CHEBI:29105"/>
        <label>1</label>
    </ligand>
</feature>
<feature type="binding site" evidence="2">
    <location>
        <position position="69"/>
    </location>
    <ligand>
        <name>Zn(2+)</name>
        <dbReference type="ChEBI" id="CHEBI:29105"/>
        <label>1</label>
    </ligand>
</feature>
<feature type="binding site" evidence="3">
    <location>
        <position position="155"/>
    </location>
    <ligand>
        <name>Zn(2+)</name>
        <dbReference type="ChEBI" id="CHEBI:29105"/>
        <label>2</label>
    </ligand>
</feature>
<feature type="binding site" evidence="2">
    <location>
        <position position="179"/>
    </location>
    <ligand>
        <name>Zn(2+)</name>
        <dbReference type="ChEBI" id="CHEBI:29105"/>
        <label>1</label>
    </ligand>
</feature>
<feature type="binding site" evidence="2">
    <location>
        <position position="230"/>
    </location>
    <ligand>
        <name>Zn(2+)</name>
        <dbReference type="ChEBI" id="CHEBI:29105"/>
        <label>1</label>
    </ligand>
</feature>
<feature type="mutagenesis site" description="Complete loss cleavage of cCMP." evidence="3">
    <original>HTHADH</original>
    <variation>ATAADA</variation>
    <location>
        <begin position="64"/>
        <end position="69"/>
    </location>
</feature>
<feature type="mutagenesis site" description="Partial loss cleavage of cCMP." evidence="3">
    <original>D</original>
    <variation>N</variation>
    <location>
        <position position="68"/>
    </location>
</feature>
<feature type="mutagenesis site" description="Complete loss cleavage of cCMP." evidence="3">
    <original>H</original>
    <variation>A</variation>
    <location>
        <position position="69"/>
    </location>
</feature>
<feature type="mutagenesis site" description="Complete loss cleavage of cCMP." evidence="3">
    <original>E</original>
    <variation>A</variation>
    <location>
        <position position="74"/>
    </location>
</feature>
<feature type="mutagenesis site" description="Partial loss cleavage of cCMP." evidence="3">
    <original>Y</original>
    <variation>A</variation>
    <location>
        <position position="112"/>
    </location>
</feature>
<feature type="strand" evidence="7">
    <location>
        <begin position="6"/>
        <end position="11"/>
    </location>
</feature>
<feature type="strand" evidence="7">
    <location>
        <begin position="18"/>
        <end position="20"/>
    </location>
</feature>
<feature type="strand" evidence="7">
    <location>
        <begin position="24"/>
        <end position="28"/>
    </location>
</feature>
<feature type="strand" evidence="7">
    <location>
        <begin position="34"/>
        <end position="37"/>
    </location>
</feature>
<feature type="helix" evidence="7">
    <location>
        <begin position="43"/>
        <end position="49"/>
    </location>
</feature>
<feature type="helix" evidence="7">
    <location>
        <begin position="54"/>
        <end position="56"/>
    </location>
</feature>
<feature type="strand" evidence="7">
    <location>
        <begin position="59"/>
        <end position="61"/>
    </location>
</feature>
<feature type="helix" evidence="7">
    <location>
        <begin position="67"/>
        <end position="70"/>
    </location>
</feature>
<feature type="helix" evidence="7">
    <location>
        <begin position="73"/>
        <end position="82"/>
    </location>
</feature>
<feature type="strand" evidence="7">
    <location>
        <begin position="84"/>
        <end position="86"/>
    </location>
</feature>
<feature type="strand" evidence="7">
    <location>
        <begin position="90"/>
        <end position="94"/>
    </location>
</feature>
<feature type="helix" evidence="7">
    <location>
        <begin position="95"/>
        <end position="97"/>
    </location>
</feature>
<feature type="helix" evidence="7">
    <location>
        <begin position="99"/>
        <end position="102"/>
    </location>
</feature>
<feature type="turn" evidence="7">
    <location>
        <begin position="103"/>
        <end position="108"/>
    </location>
</feature>
<feature type="helix" evidence="7">
    <location>
        <begin position="121"/>
        <end position="123"/>
    </location>
</feature>
<feature type="strand" evidence="7">
    <location>
        <begin position="125"/>
        <end position="130"/>
    </location>
</feature>
<feature type="strand" evidence="7">
    <location>
        <begin position="134"/>
        <end position="136"/>
    </location>
</feature>
<feature type="strand" evidence="7">
    <location>
        <begin position="138"/>
        <end position="141"/>
    </location>
</feature>
<feature type="strand" evidence="7">
    <location>
        <begin position="143"/>
        <end position="153"/>
    </location>
</feature>
<feature type="strand" evidence="7">
    <location>
        <begin position="161"/>
        <end position="168"/>
    </location>
</feature>
<feature type="strand" evidence="7">
    <location>
        <begin position="171"/>
        <end position="176"/>
    </location>
</feature>
<feature type="strand" evidence="7">
    <location>
        <begin position="194"/>
        <end position="199"/>
    </location>
</feature>
<feature type="strand" evidence="7">
    <location>
        <begin position="201"/>
        <end position="205"/>
    </location>
</feature>
<feature type="helix" evidence="7">
    <location>
        <begin position="211"/>
        <end position="215"/>
    </location>
</feature>
<feature type="helix" evidence="7">
    <location>
        <begin position="222"/>
        <end position="224"/>
    </location>
</feature>
<feature type="strand" evidence="7">
    <location>
        <begin position="226"/>
        <end position="231"/>
    </location>
</feature>
<organismHost>
    <name type="scientific">Bacillus subtilis</name>
    <dbReference type="NCBI Taxonomy" id="1423"/>
</organismHost>
<proteinExistence type="evidence at protein level"/>
<evidence type="ECO:0000250" key="1">
    <source>
        <dbReference type="UniProtKB" id="A0A2W1NDJ7"/>
    </source>
</evidence>
<evidence type="ECO:0000250" key="2">
    <source>
        <dbReference type="UniProtKB" id="P0DTL1"/>
    </source>
</evidence>
<evidence type="ECO:0000269" key="3">
    <source>
    </source>
</evidence>
<evidence type="ECO:0000303" key="4">
    <source>
    </source>
</evidence>
<evidence type="ECO:0000305" key="5"/>
<evidence type="ECO:0000312" key="6">
    <source>
        <dbReference type="EMBL" id="AXH71168.1"/>
    </source>
</evidence>
<evidence type="ECO:0007829" key="7">
    <source>
        <dbReference type="PDB" id="7T28"/>
    </source>
</evidence>
<sequence>MLHTTQIRMVGTGSAFSKKFYNNSALVTFTNGYNLLIDCGHSVPKGLHDADIPLESIDGILITHTHADHIGGLEEVALYNKFVLGGRKIDLLVPNTLVESLWENSLKGGLRYSDTYDDLSLSDYFTVRSLKTFTSGAARTQLEENIAIKLYPTFHVSHMASYAVGLEDRGEDKVFYSSDTIFDEYLIDYALTYSWVFHDCQFFTGGVHASLDELLNYIPEEDQDRVFLMHYGDNMEDFFTKTGRMRFALQGRTYIL</sequence>
<accession>A0A345MJY6</accession>
<protein>
    <recommendedName>
        <fullName evidence="4">Anti-Pycsar protein Apyc1</fullName>
        <shortName evidence="4">Apyc1</shortName>
    </recommendedName>
</protein>